<dbReference type="EC" id="2.1.1.199" evidence="1"/>
<dbReference type="EMBL" id="AM946016">
    <property type="protein sequence ID" value="CAR47246.1"/>
    <property type="molecule type" value="Genomic_DNA"/>
</dbReference>
<dbReference type="RefSeq" id="WP_002937995.1">
    <property type="nucleotide sequence ID" value="NC_012925.1"/>
</dbReference>
<dbReference type="SMR" id="C5VZR6"/>
<dbReference type="GeneID" id="8153161"/>
<dbReference type="KEGG" id="ssi:SSU1550"/>
<dbReference type="HOGENOM" id="CLU_038422_2_0_9"/>
<dbReference type="GO" id="GO:0005737">
    <property type="term" value="C:cytoplasm"/>
    <property type="evidence" value="ECO:0007669"/>
    <property type="project" value="UniProtKB-SubCell"/>
</dbReference>
<dbReference type="GO" id="GO:0071424">
    <property type="term" value="F:rRNA (cytosine-N4-)-methyltransferase activity"/>
    <property type="evidence" value="ECO:0007669"/>
    <property type="project" value="UniProtKB-UniRule"/>
</dbReference>
<dbReference type="GO" id="GO:0070475">
    <property type="term" value="P:rRNA base methylation"/>
    <property type="evidence" value="ECO:0007669"/>
    <property type="project" value="UniProtKB-UniRule"/>
</dbReference>
<dbReference type="FunFam" id="1.10.150.170:FF:000001">
    <property type="entry name" value="Ribosomal RNA small subunit methyltransferase H"/>
    <property type="match status" value="1"/>
</dbReference>
<dbReference type="Gene3D" id="1.10.150.170">
    <property type="entry name" value="Putative methyltransferase TM0872, insert domain"/>
    <property type="match status" value="1"/>
</dbReference>
<dbReference type="Gene3D" id="3.40.50.150">
    <property type="entry name" value="Vaccinia Virus protein VP39"/>
    <property type="match status" value="1"/>
</dbReference>
<dbReference type="HAMAP" id="MF_01007">
    <property type="entry name" value="16SrRNA_methyltr_H"/>
    <property type="match status" value="1"/>
</dbReference>
<dbReference type="InterPro" id="IPR002903">
    <property type="entry name" value="RsmH"/>
</dbReference>
<dbReference type="InterPro" id="IPR023397">
    <property type="entry name" value="SAM-dep_MeTrfase_MraW_recog"/>
</dbReference>
<dbReference type="InterPro" id="IPR029063">
    <property type="entry name" value="SAM-dependent_MTases_sf"/>
</dbReference>
<dbReference type="NCBIfam" id="TIGR00006">
    <property type="entry name" value="16S rRNA (cytosine(1402)-N(4))-methyltransferase RsmH"/>
    <property type="match status" value="1"/>
</dbReference>
<dbReference type="PANTHER" id="PTHR11265:SF0">
    <property type="entry name" value="12S RRNA N4-METHYLCYTIDINE METHYLTRANSFERASE"/>
    <property type="match status" value="1"/>
</dbReference>
<dbReference type="PANTHER" id="PTHR11265">
    <property type="entry name" value="S-ADENOSYL-METHYLTRANSFERASE MRAW"/>
    <property type="match status" value="1"/>
</dbReference>
<dbReference type="Pfam" id="PF01795">
    <property type="entry name" value="Methyltransf_5"/>
    <property type="match status" value="1"/>
</dbReference>
<dbReference type="PIRSF" id="PIRSF004486">
    <property type="entry name" value="MraW"/>
    <property type="match status" value="1"/>
</dbReference>
<dbReference type="SUPFAM" id="SSF81799">
    <property type="entry name" value="Putative methyltransferase TM0872, insert domain"/>
    <property type="match status" value="1"/>
</dbReference>
<dbReference type="SUPFAM" id="SSF53335">
    <property type="entry name" value="S-adenosyl-L-methionine-dependent methyltransferases"/>
    <property type="match status" value="1"/>
</dbReference>
<reference key="1">
    <citation type="journal article" date="2009" name="PLoS ONE">
        <title>Rapid evolution of virulence and drug resistance in the emerging zoonotic pathogen Streptococcus suis.</title>
        <authorList>
            <person name="Holden M.T.G."/>
            <person name="Hauser H."/>
            <person name="Sanders M."/>
            <person name="Ngo T.H."/>
            <person name="Cherevach I."/>
            <person name="Cronin A."/>
            <person name="Goodhead I."/>
            <person name="Mungall K."/>
            <person name="Quail M.A."/>
            <person name="Price C."/>
            <person name="Rabbinowitsch E."/>
            <person name="Sharp S."/>
            <person name="Croucher N.J."/>
            <person name="Chieu T.B."/>
            <person name="Mai N.T.H."/>
            <person name="Diep T.S."/>
            <person name="Chinh N.T."/>
            <person name="Kehoe M."/>
            <person name="Leigh J.A."/>
            <person name="Ward P.N."/>
            <person name="Dowson C.G."/>
            <person name="Whatmore A.M."/>
            <person name="Chanter N."/>
            <person name="Iversen P."/>
            <person name="Gottschalk M."/>
            <person name="Slater J.D."/>
            <person name="Smith H.E."/>
            <person name="Spratt B.G."/>
            <person name="Xu J."/>
            <person name="Ye C."/>
            <person name="Bentley S."/>
            <person name="Barrell B.G."/>
            <person name="Schultsz C."/>
            <person name="Maskell D.J."/>
            <person name="Parkhill J."/>
        </authorList>
    </citation>
    <scope>NUCLEOTIDE SEQUENCE [LARGE SCALE GENOMIC DNA]</scope>
    <source>
        <strain>P1/7</strain>
    </source>
</reference>
<keyword id="KW-0963">Cytoplasm</keyword>
<keyword id="KW-0489">Methyltransferase</keyword>
<keyword id="KW-0698">rRNA processing</keyword>
<keyword id="KW-0949">S-adenosyl-L-methionine</keyword>
<keyword id="KW-0808">Transferase</keyword>
<evidence type="ECO:0000255" key="1">
    <source>
        <dbReference type="HAMAP-Rule" id="MF_01007"/>
    </source>
</evidence>
<feature type="chain" id="PRO_0000387168" description="Ribosomal RNA small subunit methyltransferase H">
    <location>
        <begin position="1"/>
        <end position="316"/>
    </location>
</feature>
<feature type="binding site" evidence="1">
    <location>
        <begin position="35"/>
        <end position="37"/>
    </location>
    <ligand>
        <name>S-adenosyl-L-methionine</name>
        <dbReference type="ChEBI" id="CHEBI:59789"/>
    </ligand>
</feature>
<feature type="binding site" evidence="1">
    <location>
        <position position="55"/>
    </location>
    <ligand>
        <name>S-adenosyl-L-methionine</name>
        <dbReference type="ChEBI" id="CHEBI:59789"/>
    </ligand>
</feature>
<feature type="binding site" evidence="1">
    <location>
        <position position="84"/>
    </location>
    <ligand>
        <name>S-adenosyl-L-methionine</name>
        <dbReference type="ChEBI" id="CHEBI:59789"/>
    </ligand>
</feature>
<feature type="binding site" evidence="1">
    <location>
        <position position="105"/>
    </location>
    <ligand>
        <name>S-adenosyl-L-methionine</name>
        <dbReference type="ChEBI" id="CHEBI:59789"/>
    </ligand>
</feature>
<feature type="binding site" evidence="1">
    <location>
        <position position="112"/>
    </location>
    <ligand>
        <name>S-adenosyl-L-methionine</name>
        <dbReference type="ChEBI" id="CHEBI:59789"/>
    </ligand>
</feature>
<accession>C5VZR6</accession>
<sequence length="316" mass="35731">MTKEFNHTTVLLHETVDMLDIKPNGIYVDATLGGAGHSEYLLSQLTDGGHLYAFDQDQTAIDHAHIRLASYIEKGQVTFIRDNFRNLKTRLAELGVTEIDGICYDLGVSSPQLDERERGFSYKQDAPLDMRMNREGHLTAYDVVNNYDYHDLVRIFFKYGEDKFSKQIARKIEQARAVKPIETTTELAELIKSAKPAKELKKKGHPAKQIFQAIRIEVNDELGAADESIQQAIDLLALDGRISVITFHSLEDRLTKQLFKEASTIDVPKGLPFIPDDLKAPLELVNRKPILPSQEELEANNRAHSAKLRVAKKVHK</sequence>
<comment type="function">
    <text evidence="1">Specifically methylates the N4 position of cytidine in position 1402 (C1402) of 16S rRNA.</text>
</comment>
<comment type="catalytic activity">
    <reaction evidence="1">
        <text>cytidine(1402) in 16S rRNA + S-adenosyl-L-methionine = N(4)-methylcytidine(1402) in 16S rRNA + S-adenosyl-L-homocysteine + H(+)</text>
        <dbReference type="Rhea" id="RHEA:42928"/>
        <dbReference type="Rhea" id="RHEA-COMP:10286"/>
        <dbReference type="Rhea" id="RHEA-COMP:10287"/>
        <dbReference type="ChEBI" id="CHEBI:15378"/>
        <dbReference type="ChEBI" id="CHEBI:57856"/>
        <dbReference type="ChEBI" id="CHEBI:59789"/>
        <dbReference type="ChEBI" id="CHEBI:74506"/>
        <dbReference type="ChEBI" id="CHEBI:82748"/>
        <dbReference type="EC" id="2.1.1.199"/>
    </reaction>
</comment>
<comment type="subcellular location">
    <subcellularLocation>
        <location evidence="1">Cytoplasm</location>
    </subcellularLocation>
</comment>
<comment type="similarity">
    <text evidence="1">Belongs to the methyltransferase superfamily. RsmH family.</text>
</comment>
<organism>
    <name type="scientific">Streptococcus suis (strain P1/7)</name>
    <dbReference type="NCBI Taxonomy" id="218494"/>
    <lineage>
        <taxon>Bacteria</taxon>
        <taxon>Bacillati</taxon>
        <taxon>Bacillota</taxon>
        <taxon>Bacilli</taxon>
        <taxon>Lactobacillales</taxon>
        <taxon>Streptococcaceae</taxon>
        <taxon>Streptococcus</taxon>
    </lineage>
</organism>
<name>RSMH_STRSE</name>
<proteinExistence type="inferred from homology"/>
<gene>
    <name evidence="1" type="primary">rsmH</name>
    <name type="synonym">mraW</name>
    <name type="ordered locus">SSU1550</name>
</gene>
<protein>
    <recommendedName>
        <fullName evidence="1">Ribosomal RNA small subunit methyltransferase H</fullName>
        <ecNumber evidence="1">2.1.1.199</ecNumber>
    </recommendedName>
    <alternativeName>
        <fullName evidence="1">16S rRNA m(4)C1402 methyltransferase</fullName>
    </alternativeName>
    <alternativeName>
        <fullName evidence="1">rRNA (cytosine-N(4)-)-methyltransferase RsmH</fullName>
    </alternativeName>
</protein>